<feature type="chain" id="PRO_0000205675" description="Tropomyosin">
    <location>
        <begin position="1"/>
        <end position="274"/>
    </location>
</feature>
<feature type="region of interest" description="Disordered" evidence="2">
    <location>
        <begin position="1"/>
        <end position="45"/>
    </location>
</feature>
<feature type="coiled-coil region" evidence="1">
    <location>
        <begin position="1"/>
        <end position="274"/>
    </location>
</feature>
<feature type="compositionally biased region" description="Basic and acidic residues" evidence="2">
    <location>
        <begin position="1"/>
        <end position="35"/>
    </location>
</feature>
<organism>
    <name type="scientific">Metapenaeus ensis</name>
    <name type="common">Greasyback shrimp</name>
    <name type="synonym">Penaeus ensis</name>
    <dbReference type="NCBI Taxonomy" id="32278"/>
    <lineage>
        <taxon>Eukaryota</taxon>
        <taxon>Metazoa</taxon>
        <taxon>Ecdysozoa</taxon>
        <taxon>Arthropoda</taxon>
        <taxon>Crustacea</taxon>
        <taxon>Multicrustacea</taxon>
        <taxon>Malacostraca</taxon>
        <taxon>Eumalacostraca</taxon>
        <taxon>Eucarida</taxon>
        <taxon>Decapoda</taxon>
        <taxon>Dendrobranchiata</taxon>
        <taxon>Penaeoidea</taxon>
        <taxon>Penaeidae</taxon>
        <taxon>Metapenaeus</taxon>
    </lineage>
</organism>
<reference key="1">
    <citation type="journal article" date="1994" name="J. Allergy Clin. Immunol.">
        <title>Cloning, expression, and primary structure of Metapenaeus ensis tropomyosin, the major heat-stable shrimp allergen.</title>
        <authorList>
            <person name="Leung P.S.C."/>
            <person name="Chu K.H."/>
            <person name="Chow W.K."/>
            <person name="Ansari A."/>
            <person name="Bandea C.I."/>
            <person name="Kwan H.S."/>
            <person name="Nagy S.M."/>
            <person name="Gershwin M.E."/>
        </authorList>
    </citation>
    <scope>NUCLEOTIDE SEQUENCE [MRNA]</scope>
    <source>
        <tissue>Muscle</tissue>
    </source>
</reference>
<name>TPM_METEN</name>
<sequence length="274" mass="31705">MKLEKDNAMDRADTLEQQNKEANNRAEKSEEEVHNLQKRMQQLENDLDQVQESLLKANNQLVEKDKALSNAEGEVAALNRRIQLLEEDLERSEERLNTATTKLAEASQAADESERMRKVLENRSLSDEERMDALENQLKEARFLAEEADRKYDEVARKLAMVEADLERAEERAETGESKIVELEEELRVVGNNLKSLEVSEEKANQREEAYKEQIKTLTNKLKAAEARAEFAERSVQKLQKEVDRLEDELVNEKEKYKSITDELDQTFSELSGY</sequence>
<evidence type="ECO:0000250" key="1"/>
<evidence type="ECO:0000256" key="2">
    <source>
        <dbReference type="SAM" id="MobiDB-lite"/>
    </source>
</evidence>
<evidence type="ECO:0000305" key="3"/>
<protein>
    <recommendedName>
        <fullName>Tropomyosin</fullName>
    </recommendedName>
    <alternativeName>
        <fullName>Allergen Met e I</fullName>
    </alternativeName>
    <allergenName>Met e 1</allergenName>
</protein>
<dbReference type="EMBL" id="U08008">
    <property type="protein sequence ID" value="AAA60330.1"/>
    <property type="molecule type" value="mRNA"/>
</dbReference>
<dbReference type="SMR" id="Q25456"/>
<dbReference type="Allergome" id="3376">
    <property type="allergen name" value="Met e 1.0101"/>
</dbReference>
<dbReference type="Allergome" id="477">
    <property type="allergen name" value="Met e 1"/>
</dbReference>
<dbReference type="FunFam" id="1.20.5.170:FF:000005">
    <property type="entry name" value="Tropomyosin alpha-1 chain"/>
    <property type="match status" value="1"/>
</dbReference>
<dbReference type="FunFam" id="1.20.5.170:FF:000001">
    <property type="entry name" value="Tropomyosin alpha-1 chain isoform 1"/>
    <property type="match status" value="1"/>
</dbReference>
<dbReference type="FunFam" id="1.20.5.340:FF:000001">
    <property type="entry name" value="Tropomyosin alpha-1 chain isoform 2"/>
    <property type="match status" value="1"/>
</dbReference>
<dbReference type="Gene3D" id="1.20.5.170">
    <property type="match status" value="2"/>
</dbReference>
<dbReference type="Gene3D" id="1.20.5.340">
    <property type="match status" value="1"/>
</dbReference>
<dbReference type="InterPro" id="IPR000533">
    <property type="entry name" value="Tropomyosin"/>
</dbReference>
<dbReference type="PANTHER" id="PTHR19269">
    <property type="entry name" value="TROPOMYOSIN"/>
    <property type="match status" value="1"/>
</dbReference>
<dbReference type="Pfam" id="PF00261">
    <property type="entry name" value="Tropomyosin"/>
    <property type="match status" value="1"/>
</dbReference>
<dbReference type="PRINTS" id="PR00194">
    <property type="entry name" value="TROPOMYOSIN"/>
</dbReference>
<dbReference type="SUPFAM" id="SSF57997">
    <property type="entry name" value="Tropomyosin"/>
    <property type="match status" value="1"/>
</dbReference>
<dbReference type="PROSITE" id="PS00326">
    <property type="entry name" value="TROPOMYOSIN"/>
    <property type="match status" value="1"/>
</dbReference>
<comment type="function">
    <text>Tropomyosin, in association with the troponin complex, plays a central role in the calcium dependent regulation of muscle contraction.</text>
</comment>
<comment type="subunit">
    <text evidence="1">Homodimer.</text>
</comment>
<comment type="domain">
    <text>The molecule is in a coiled coil structure that is formed by 2 polypeptide chains. The sequence exhibits a prominent seven-residues periodicity.</text>
</comment>
<comment type="allergen">
    <text>Causes an allergic reaction in human. Shrimp is a common cause of seafood hypersensitivity. This protein is the major heat-stable shrimp allergen.</text>
</comment>
<comment type="similarity">
    <text evidence="3">Belongs to the tropomyosin family.</text>
</comment>
<accession>Q25456</accession>
<proteinExistence type="evidence at protein level"/>
<keyword id="KW-0020">Allergen</keyword>
<keyword id="KW-0175">Coiled coil</keyword>
<keyword id="KW-0677">Repeat</keyword>